<keyword id="KW-0963">Cytoplasm</keyword>
<keyword id="KW-0238">DNA-binding</keyword>
<feature type="chain" id="PRO_0000278021" description="Nucleoid-associated protein RT0857">
    <location>
        <begin position="1"/>
        <end position="107"/>
    </location>
</feature>
<proteinExistence type="inferred from homology"/>
<evidence type="ECO:0000255" key="1">
    <source>
        <dbReference type="HAMAP-Rule" id="MF_00274"/>
    </source>
</evidence>
<reference key="1">
    <citation type="journal article" date="2004" name="J. Bacteriol.">
        <title>Complete genome sequence of Rickettsia typhi and comparison with sequences of other Rickettsiae.</title>
        <authorList>
            <person name="McLeod M.P."/>
            <person name="Qin X."/>
            <person name="Karpathy S.E."/>
            <person name="Gioia J."/>
            <person name="Highlander S.K."/>
            <person name="Fox G.E."/>
            <person name="McNeill T.Z."/>
            <person name="Jiang H."/>
            <person name="Muzny D."/>
            <person name="Jacob L.S."/>
            <person name="Hawes A.C."/>
            <person name="Sodergren E."/>
            <person name="Gill R."/>
            <person name="Hume J."/>
            <person name="Morgan M."/>
            <person name="Fan G."/>
            <person name="Amin A.G."/>
            <person name="Gibbs R.A."/>
            <person name="Hong C."/>
            <person name="Yu X.-J."/>
            <person name="Walker D.H."/>
            <person name="Weinstock G.M."/>
        </authorList>
    </citation>
    <scope>NUCLEOTIDE SEQUENCE [LARGE SCALE GENOMIC DNA]</scope>
    <source>
        <strain>ATCC VR-144 / Wilmington</strain>
    </source>
</reference>
<accession>Q68VP6</accession>
<comment type="function">
    <text evidence="1">Binds to DNA and alters its conformation. May be involved in regulation of gene expression, nucleoid organization and DNA protection.</text>
</comment>
<comment type="subunit">
    <text evidence="1">Homodimer.</text>
</comment>
<comment type="subcellular location">
    <subcellularLocation>
        <location evidence="1">Cytoplasm</location>
        <location evidence="1">Nucleoid</location>
    </subcellularLocation>
</comment>
<comment type="similarity">
    <text evidence="1">Belongs to the YbaB/EbfC family.</text>
</comment>
<organism>
    <name type="scientific">Rickettsia typhi (strain ATCC VR-144 / Wilmington)</name>
    <dbReference type="NCBI Taxonomy" id="257363"/>
    <lineage>
        <taxon>Bacteria</taxon>
        <taxon>Pseudomonadati</taxon>
        <taxon>Pseudomonadota</taxon>
        <taxon>Alphaproteobacteria</taxon>
        <taxon>Rickettsiales</taxon>
        <taxon>Rickettsiaceae</taxon>
        <taxon>Rickettsieae</taxon>
        <taxon>Rickettsia</taxon>
        <taxon>typhus group</taxon>
    </lineage>
</organism>
<name>Y857_RICTY</name>
<sequence>MVNFNQFLKQAQSMQKKMQEAQEQMANTRYTGKAGGMLVEIIITGKGEIEKVSIDESLLKIEEKEILEDLIKVAFNDAKQKCDEDSQNSLSGALNGMSLPPGFKIPF</sequence>
<protein>
    <recommendedName>
        <fullName evidence="1">Nucleoid-associated protein RT0857</fullName>
    </recommendedName>
</protein>
<dbReference type="EMBL" id="AE017197">
    <property type="protein sequence ID" value="AAU04310.1"/>
    <property type="molecule type" value="Genomic_DNA"/>
</dbReference>
<dbReference type="RefSeq" id="WP_011191284.1">
    <property type="nucleotide sequence ID" value="NC_006142.1"/>
</dbReference>
<dbReference type="SMR" id="Q68VP6"/>
<dbReference type="KEGG" id="rty:RT0857"/>
<dbReference type="eggNOG" id="COG0718">
    <property type="taxonomic scope" value="Bacteria"/>
</dbReference>
<dbReference type="HOGENOM" id="CLU_140930_0_0_5"/>
<dbReference type="OrthoDB" id="9803080at2"/>
<dbReference type="Proteomes" id="UP000000604">
    <property type="component" value="Chromosome"/>
</dbReference>
<dbReference type="GO" id="GO:0043590">
    <property type="term" value="C:bacterial nucleoid"/>
    <property type="evidence" value="ECO:0007669"/>
    <property type="project" value="UniProtKB-UniRule"/>
</dbReference>
<dbReference type="GO" id="GO:0005829">
    <property type="term" value="C:cytosol"/>
    <property type="evidence" value="ECO:0007669"/>
    <property type="project" value="TreeGrafter"/>
</dbReference>
<dbReference type="GO" id="GO:0003677">
    <property type="term" value="F:DNA binding"/>
    <property type="evidence" value="ECO:0007669"/>
    <property type="project" value="UniProtKB-UniRule"/>
</dbReference>
<dbReference type="Gene3D" id="3.30.1310.10">
    <property type="entry name" value="Nucleoid-associated protein YbaB-like domain"/>
    <property type="match status" value="1"/>
</dbReference>
<dbReference type="HAMAP" id="MF_00274">
    <property type="entry name" value="DNA_YbaB_EbfC"/>
    <property type="match status" value="1"/>
</dbReference>
<dbReference type="InterPro" id="IPR036894">
    <property type="entry name" value="YbaB-like_sf"/>
</dbReference>
<dbReference type="InterPro" id="IPR004401">
    <property type="entry name" value="YbaB/EbfC"/>
</dbReference>
<dbReference type="NCBIfam" id="TIGR00103">
    <property type="entry name" value="DNA_YbaB_EbfC"/>
    <property type="match status" value="1"/>
</dbReference>
<dbReference type="PANTHER" id="PTHR33449">
    <property type="entry name" value="NUCLEOID-ASSOCIATED PROTEIN YBAB"/>
    <property type="match status" value="1"/>
</dbReference>
<dbReference type="PANTHER" id="PTHR33449:SF1">
    <property type="entry name" value="NUCLEOID-ASSOCIATED PROTEIN YBAB"/>
    <property type="match status" value="1"/>
</dbReference>
<dbReference type="Pfam" id="PF02575">
    <property type="entry name" value="YbaB_DNA_bd"/>
    <property type="match status" value="1"/>
</dbReference>
<dbReference type="PIRSF" id="PIRSF004555">
    <property type="entry name" value="UCP004555"/>
    <property type="match status" value="1"/>
</dbReference>
<dbReference type="SUPFAM" id="SSF82607">
    <property type="entry name" value="YbaB-like"/>
    <property type="match status" value="1"/>
</dbReference>
<gene>
    <name type="ordered locus">RT0857</name>
</gene>